<accession>Q0T529</accession>
<sequence length="479" mass="53293">MAQHTVYFPDAFLTQMREAMPSTLSFDDFLAACQRPLRRSIRVNTLKISVADFLQLTAPYGWTLTPIPWCEEGFWIERDNEDALPLGSTTEHLSGLFYIQEASSMLPVAALFADGNAPQRVMDVAAAPGSKTTQIAARMNNEGAILANEFSASWVKVLHANISRCGISNVALTHFGGRVFGAAVPEMFDAILLDAPCSGEGVVRKDPDALKNWSPESNQEIAATQRELIDSAFHALRPGGTLVYSTCTLNREENEAVCRWLKETYPDEVEFLPLGDLFPGANKALTEEGFLHVFPQIYDCEGFFVARLRKTQAIPALPAPKYKVGNFPFSPVKDREAGQIRQAAASVGLNWDGNLRLWQRDKELWLFPVGIEALIGKVRFSRLGIKLAETHNKGYRWQHEAVIAHASPDNVNAFELTPQEAEEWYRGRDVYPQAAPVADDVLVTFQHQPIGLAKRIGSRLKNSYPRELVRDGKLFTSNA</sequence>
<organism>
    <name type="scientific">Shigella flexneri serotype 5b (strain 8401)</name>
    <dbReference type="NCBI Taxonomy" id="373384"/>
    <lineage>
        <taxon>Bacteria</taxon>
        <taxon>Pseudomonadati</taxon>
        <taxon>Pseudomonadota</taxon>
        <taxon>Gammaproteobacteria</taxon>
        <taxon>Enterobacterales</taxon>
        <taxon>Enterobacteriaceae</taxon>
        <taxon>Shigella</taxon>
    </lineage>
</organism>
<protein>
    <recommendedName>
        <fullName evidence="1">Ribosomal RNA small subunit methyltransferase F</fullName>
        <ecNumber evidence="1">2.1.1.178</ecNumber>
    </recommendedName>
    <alternativeName>
        <fullName evidence="1">16S rRNA m5C1407 methyltransferase</fullName>
    </alternativeName>
    <alternativeName>
        <fullName evidence="1">rRNA (cytosine-C(5)-)-methyltransferase RsmF</fullName>
    </alternativeName>
</protein>
<evidence type="ECO:0000255" key="1">
    <source>
        <dbReference type="HAMAP-Rule" id="MF_01579"/>
    </source>
</evidence>
<evidence type="ECO:0000305" key="2"/>
<keyword id="KW-0963">Cytoplasm</keyword>
<keyword id="KW-0489">Methyltransferase</keyword>
<keyword id="KW-0694">RNA-binding</keyword>
<keyword id="KW-0698">rRNA processing</keyword>
<keyword id="KW-0949">S-adenosyl-L-methionine</keyword>
<keyword id="KW-0808">Transferase</keyword>
<feature type="chain" id="PRO_0000285020" description="Ribosomal RNA small subunit methyltransferase F">
    <location>
        <begin position="1"/>
        <end position="479"/>
    </location>
</feature>
<feature type="active site" description="Nucleophile" evidence="1">
    <location>
        <position position="247"/>
    </location>
</feature>
<feature type="binding site" evidence="1">
    <location>
        <begin position="125"/>
        <end position="131"/>
    </location>
    <ligand>
        <name>S-adenosyl-L-methionine</name>
        <dbReference type="ChEBI" id="CHEBI:59789"/>
    </ligand>
</feature>
<feature type="binding site" evidence="1">
    <location>
        <position position="149"/>
    </location>
    <ligand>
        <name>S-adenosyl-L-methionine</name>
        <dbReference type="ChEBI" id="CHEBI:59789"/>
    </ligand>
</feature>
<feature type="binding site" evidence="1">
    <location>
        <position position="177"/>
    </location>
    <ligand>
        <name>S-adenosyl-L-methionine</name>
        <dbReference type="ChEBI" id="CHEBI:59789"/>
    </ligand>
</feature>
<feature type="binding site" evidence="1">
    <location>
        <position position="194"/>
    </location>
    <ligand>
        <name>S-adenosyl-L-methionine</name>
        <dbReference type="ChEBI" id="CHEBI:59789"/>
    </ligand>
</feature>
<name>RSMF_SHIF8</name>
<comment type="function">
    <text evidence="1">Specifically methylates the cytosine at position 1407 (m5C1407) of 16S rRNA.</text>
</comment>
<comment type="catalytic activity">
    <reaction evidence="1">
        <text>cytidine(1407) in 16S rRNA + S-adenosyl-L-methionine = 5-methylcytidine(1407) in 16S rRNA + S-adenosyl-L-homocysteine + H(+)</text>
        <dbReference type="Rhea" id="RHEA:42756"/>
        <dbReference type="Rhea" id="RHEA-COMP:10223"/>
        <dbReference type="Rhea" id="RHEA-COMP:10224"/>
        <dbReference type="ChEBI" id="CHEBI:15378"/>
        <dbReference type="ChEBI" id="CHEBI:57856"/>
        <dbReference type="ChEBI" id="CHEBI:59789"/>
        <dbReference type="ChEBI" id="CHEBI:74483"/>
        <dbReference type="ChEBI" id="CHEBI:82748"/>
        <dbReference type="EC" id="2.1.1.178"/>
    </reaction>
</comment>
<comment type="subcellular location">
    <subcellularLocation>
        <location evidence="1">Cytoplasm</location>
    </subcellularLocation>
</comment>
<comment type="similarity">
    <text evidence="1">Belongs to the class I-like SAM-binding methyltransferase superfamily. RsmB/NOP family.</text>
</comment>
<comment type="sequence caution" evidence="2">
    <conflict type="erroneous initiation">
        <sequence resource="EMBL-CDS" id="ABF03586"/>
    </conflict>
</comment>
<gene>
    <name evidence="1" type="primary">rsmF</name>
    <name type="ordered locus">SFV_1393</name>
</gene>
<reference key="1">
    <citation type="journal article" date="2006" name="BMC Genomics">
        <title>Complete genome sequence of Shigella flexneri 5b and comparison with Shigella flexneri 2a.</title>
        <authorList>
            <person name="Nie H."/>
            <person name="Yang F."/>
            <person name="Zhang X."/>
            <person name="Yang J."/>
            <person name="Chen L."/>
            <person name="Wang J."/>
            <person name="Xiong Z."/>
            <person name="Peng J."/>
            <person name="Sun L."/>
            <person name="Dong J."/>
            <person name="Xue Y."/>
            <person name="Xu X."/>
            <person name="Chen S."/>
            <person name="Yao Z."/>
            <person name="Shen Y."/>
            <person name="Jin Q."/>
        </authorList>
    </citation>
    <scope>NUCLEOTIDE SEQUENCE [LARGE SCALE GENOMIC DNA]</scope>
    <source>
        <strain>8401</strain>
    </source>
</reference>
<proteinExistence type="inferred from homology"/>
<dbReference type="EC" id="2.1.1.178" evidence="1"/>
<dbReference type="EMBL" id="CP000266">
    <property type="protein sequence ID" value="ABF03586.1"/>
    <property type="status" value="ALT_INIT"/>
    <property type="molecule type" value="Genomic_DNA"/>
</dbReference>
<dbReference type="RefSeq" id="WP_000057029.1">
    <property type="nucleotide sequence ID" value="NC_008258.1"/>
</dbReference>
<dbReference type="SMR" id="Q0T529"/>
<dbReference type="KEGG" id="sfv:SFV_1393"/>
<dbReference type="HOGENOM" id="CLU_005316_6_2_6"/>
<dbReference type="Proteomes" id="UP000000659">
    <property type="component" value="Chromosome"/>
</dbReference>
<dbReference type="GO" id="GO:0005737">
    <property type="term" value="C:cytoplasm"/>
    <property type="evidence" value="ECO:0007669"/>
    <property type="project" value="UniProtKB-SubCell"/>
</dbReference>
<dbReference type="GO" id="GO:0003723">
    <property type="term" value="F:RNA binding"/>
    <property type="evidence" value="ECO:0007669"/>
    <property type="project" value="UniProtKB-KW"/>
</dbReference>
<dbReference type="GO" id="GO:0009383">
    <property type="term" value="F:rRNA (cytosine-C5-)-methyltransferase activity"/>
    <property type="evidence" value="ECO:0007669"/>
    <property type="project" value="TreeGrafter"/>
</dbReference>
<dbReference type="GO" id="GO:0070475">
    <property type="term" value="P:rRNA base methylation"/>
    <property type="evidence" value="ECO:0007669"/>
    <property type="project" value="TreeGrafter"/>
</dbReference>
<dbReference type="FunFam" id="3.10.450.720:FF:000001">
    <property type="entry name" value="Ribosomal RNA small subunit methyltransferase F"/>
    <property type="match status" value="1"/>
</dbReference>
<dbReference type="FunFam" id="3.40.50.150:FF:000079">
    <property type="entry name" value="Ribosomal RNA small subunit methyltransferase F"/>
    <property type="match status" value="1"/>
</dbReference>
<dbReference type="Gene3D" id="3.10.450.720">
    <property type="match status" value="1"/>
</dbReference>
<dbReference type="Gene3D" id="3.40.50.150">
    <property type="entry name" value="Vaccinia Virus protein VP39"/>
    <property type="match status" value="1"/>
</dbReference>
<dbReference type="HAMAP" id="MF_01579">
    <property type="entry name" value="16SrRNA_methyltr_F"/>
    <property type="match status" value="1"/>
</dbReference>
<dbReference type="InterPro" id="IPR031341">
    <property type="entry name" value="Methyltr_RsmF_N"/>
</dbReference>
<dbReference type="InterPro" id="IPR049560">
    <property type="entry name" value="MeTrfase_RsmB-F_NOP2_cat"/>
</dbReference>
<dbReference type="InterPro" id="IPR001678">
    <property type="entry name" value="MeTrfase_RsmB-F_NOP2_dom"/>
</dbReference>
<dbReference type="InterPro" id="IPR027391">
    <property type="entry name" value="Nol1_Nop2_Fmu_2"/>
</dbReference>
<dbReference type="InterPro" id="IPR011023">
    <property type="entry name" value="Nop2p"/>
</dbReference>
<dbReference type="InterPro" id="IPR023267">
    <property type="entry name" value="RCMT"/>
</dbReference>
<dbReference type="InterPro" id="IPR023545">
    <property type="entry name" value="rRNA_ssu_MeTfrase_F"/>
</dbReference>
<dbReference type="InterPro" id="IPR018314">
    <property type="entry name" value="RsmB/NOL1/NOP2-like_CS"/>
</dbReference>
<dbReference type="InterPro" id="IPR029063">
    <property type="entry name" value="SAM-dependent_MTases_sf"/>
</dbReference>
<dbReference type="InterPro" id="IPR048457">
    <property type="entry name" value="YebU_pre-PUA_dom"/>
</dbReference>
<dbReference type="NCBIfam" id="TIGR00446">
    <property type="entry name" value="nop2p"/>
    <property type="match status" value="1"/>
</dbReference>
<dbReference type="NCBIfam" id="NF008898">
    <property type="entry name" value="PRK11933.1"/>
    <property type="match status" value="1"/>
</dbReference>
<dbReference type="PANTHER" id="PTHR22807:SF30">
    <property type="entry name" value="28S RRNA (CYTOSINE(4447)-C(5))-METHYLTRANSFERASE-RELATED"/>
    <property type="match status" value="1"/>
</dbReference>
<dbReference type="PANTHER" id="PTHR22807">
    <property type="entry name" value="NOP2 YEAST -RELATED NOL1/NOP2/FMU SUN DOMAIN-CONTAINING"/>
    <property type="match status" value="1"/>
</dbReference>
<dbReference type="Pfam" id="PF01189">
    <property type="entry name" value="Methyltr_RsmB-F"/>
    <property type="match status" value="1"/>
</dbReference>
<dbReference type="Pfam" id="PF17125">
    <property type="entry name" value="Methyltr_RsmF_N"/>
    <property type="match status" value="1"/>
</dbReference>
<dbReference type="Pfam" id="PF13636">
    <property type="entry name" value="Methyltranf_PUA"/>
    <property type="match status" value="1"/>
</dbReference>
<dbReference type="Pfam" id="PF21150">
    <property type="entry name" value="YebU_pre-PUA_dom"/>
    <property type="match status" value="1"/>
</dbReference>
<dbReference type="PRINTS" id="PR02008">
    <property type="entry name" value="RCMTFAMILY"/>
</dbReference>
<dbReference type="SUPFAM" id="SSF53335">
    <property type="entry name" value="S-adenosyl-L-methionine-dependent methyltransferases"/>
    <property type="match status" value="1"/>
</dbReference>
<dbReference type="PROSITE" id="PS01153">
    <property type="entry name" value="NOL1_NOP2_SUN"/>
    <property type="match status" value="1"/>
</dbReference>
<dbReference type="PROSITE" id="PS51686">
    <property type="entry name" value="SAM_MT_RSMB_NOP"/>
    <property type="match status" value="1"/>
</dbReference>